<keyword id="KW-0903">Direct protein sequencing</keyword>
<keyword id="KW-0520">NAD</keyword>
<keyword id="KW-0560">Oxidoreductase</keyword>
<feature type="chain" id="PRO_0000424208" description="Secoisolariciresinol dehydrogenase">
    <location>
        <begin position="1"/>
        <end position="277" status="greater than"/>
    </location>
</feature>
<feature type="active site" description="Proton donor/acceptor" evidence="1">
    <location>
        <position position="166"/>
    </location>
</feature>
<feature type="binding site" evidence="1">
    <location>
        <begin position="24"/>
        <end position="29"/>
    </location>
    <ligand>
        <name>NAD(+)</name>
        <dbReference type="ChEBI" id="CHEBI:57540"/>
    </ligand>
</feature>
<feature type="binding site" evidence="1">
    <location>
        <position position="48"/>
    </location>
    <ligand>
        <name>NAD(+)</name>
        <dbReference type="ChEBI" id="CHEBI:57540"/>
    </ligand>
</feature>
<feature type="binding site" evidence="1">
    <location>
        <position position="73"/>
    </location>
    <ligand>
        <name>NAD(+)</name>
        <dbReference type="ChEBI" id="CHEBI:57540"/>
    </ligand>
</feature>
<feature type="binding site" evidence="1">
    <location>
        <position position="99"/>
    </location>
    <ligand>
        <name>NAD(+)</name>
        <dbReference type="ChEBI" id="CHEBI:57540"/>
    </ligand>
</feature>
<feature type="binding site" evidence="1">
    <location>
        <position position="163"/>
    </location>
    <ligand>
        <name>substrate</name>
    </ligand>
</feature>
<feature type="binding site" evidence="1">
    <location>
        <position position="170"/>
    </location>
    <ligand>
        <name>NAD(+)</name>
        <dbReference type="ChEBI" id="CHEBI:57540"/>
    </ligand>
</feature>
<feature type="non-terminal residue">
    <location>
        <position position="277"/>
    </location>
</feature>
<protein>
    <recommendedName>
        <fullName>Secoisolariciresinol dehydrogenase</fullName>
        <ecNumber>1.1.1.331</ecNumber>
    </recommendedName>
</protein>
<evidence type="ECO:0000250" key="1"/>
<evidence type="ECO:0000269" key="2">
    <source>
    </source>
</evidence>
<evidence type="ECO:0000305" key="3"/>
<dbReference type="EC" id="1.1.1.331"/>
<dbReference type="EMBL" id="AF352735">
    <property type="protein sequence ID" value="AAK38665.1"/>
    <property type="molecule type" value="mRNA"/>
</dbReference>
<dbReference type="SMR" id="Q94KL7"/>
<dbReference type="BRENDA" id="1.1.1.331">
    <property type="organism ID" value="13002"/>
</dbReference>
<dbReference type="GO" id="GO:0120529">
    <property type="term" value="F:secoisolariciresinol dehydrogenase activity"/>
    <property type="evidence" value="ECO:0000314"/>
    <property type="project" value="UniProtKB"/>
</dbReference>
<dbReference type="GO" id="GO:0009807">
    <property type="term" value="P:lignan biosynthetic process"/>
    <property type="evidence" value="ECO:0000314"/>
    <property type="project" value="UniProtKB"/>
</dbReference>
<dbReference type="FunFam" id="3.40.50.720:FF:000084">
    <property type="entry name" value="Short-chain dehydrogenase reductase"/>
    <property type="match status" value="1"/>
</dbReference>
<dbReference type="Gene3D" id="3.40.50.720">
    <property type="entry name" value="NAD(P)-binding Rossmann-like Domain"/>
    <property type="match status" value="1"/>
</dbReference>
<dbReference type="InterPro" id="IPR036291">
    <property type="entry name" value="NAD(P)-bd_dom_sf"/>
</dbReference>
<dbReference type="InterPro" id="IPR020904">
    <property type="entry name" value="Sc_DH/Rdtase_CS"/>
</dbReference>
<dbReference type="InterPro" id="IPR002347">
    <property type="entry name" value="SDR_fam"/>
</dbReference>
<dbReference type="NCBIfam" id="NF005559">
    <property type="entry name" value="PRK07231.1"/>
    <property type="match status" value="1"/>
</dbReference>
<dbReference type="PANTHER" id="PTHR43180">
    <property type="entry name" value="3-OXOACYL-(ACYL-CARRIER-PROTEIN) REDUCTASE (AFU_ORTHOLOGUE AFUA_6G11210)"/>
    <property type="match status" value="1"/>
</dbReference>
<dbReference type="PANTHER" id="PTHR43180:SF50">
    <property type="entry name" value="SHORT CHAIN DEHYDROGENASE"/>
    <property type="match status" value="1"/>
</dbReference>
<dbReference type="Pfam" id="PF13561">
    <property type="entry name" value="adh_short_C2"/>
    <property type="match status" value="1"/>
</dbReference>
<dbReference type="PRINTS" id="PR00081">
    <property type="entry name" value="GDHRDH"/>
</dbReference>
<dbReference type="PRINTS" id="PR00080">
    <property type="entry name" value="SDRFAMILY"/>
</dbReference>
<dbReference type="SUPFAM" id="SSF51735">
    <property type="entry name" value="NAD(P)-binding Rossmann-fold domains"/>
    <property type="match status" value="1"/>
</dbReference>
<dbReference type="PROSITE" id="PS00061">
    <property type="entry name" value="ADH_SHORT"/>
    <property type="match status" value="1"/>
</dbReference>
<name>SILD_FORIN</name>
<accession>Q94KL7</accession>
<proteinExistence type="evidence at protein level"/>
<comment type="function">
    <text evidence="2">Oxidoreductase involved in lignan biosynthesis. Catalyzes the stereospecific conversion of (-)-secoisolariciresinol to (-)-matairesinol via a lactol intermediate.</text>
</comment>
<comment type="catalytic activity">
    <reaction evidence="2">
        <text>(-)-secoisolariciresinol + 2 NAD(+) = (-)-matairesinol + 2 NADH + 2 H(+)</text>
        <dbReference type="Rhea" id="RHEA:33887"/>
        <dbReference type="ChEBI" id="CHEBI:6698"/>
        <dbReference type="ChEBI" id="CHEBI:15378"/>
        <dbReference type="ChEBI" id="CHEBI:57540"/>
        <dbReference type="ChEBI" id="CHEBI:57945"/>
        <dbReference type="ChEBI" id="CHEBI:65004"/>
        <dbReference type="EC" id="1.1.1.331"/>
    </reaction>
</comment>
<comment type="subunit">
    <text evidence="1">Homotetramer.</text>
</comment>
<comment type="similarity">
    <text evidence="3">Belongs to the short-chain dehydrogenases/reductases (SDR) family.</text>
</comment>
<sequence length="277" mass="29256">MAATSQVLTAIARRLEGKVALITGGASGIGETTAKLFSQHGAKVAIADVQDELGHSVVEAIGTSNSTYIHCDVTNEDGVKNAVDNTVSTYGKLDIMFSNAGISDPNRPRIIDNEKADFERVFSVNVTGVFLCMKHAARVMIPARSGNIISTASLSSTMGGGSSHAYCGSKHAVLGLTRNLAVELGQFGIRVNCLSPFGLPTALGKKFSGIKNEEEFENVINFAGNLKGPKFNVEDVANAALYLASDEAKYVSGHNLFIDGGFSVCNSVIKVFQYPDS</sequence>
<organism>
    <name type="scientific">Forsythia intermedia</name>
    <name type="common">Border forsythia</name>
    <name type="synonym">Forsythia suspensa x Forsythia viridissima</name>
    <dbReference type="NCBI Taxonomy" id="55183"/>
    <lineage>
        <taxon>Eukaryota</taxon>
        <taxon>Viridiplantae</taxon>
        <taxon>Streptophyta</taxon>
        <taxon>Embryophyta</taxon>
        <taxon>Tracheophyta</taxon>
        <taxon>Spermatophyta</taxon>
        <taxon>Magnoliopsida</taxon>
        <taxon>eudicotyledons</taxon>
        <taxon>Gunneridae</taxon>
        <taxon>Pentapetalae</taxon>
        <taxon>asterids</taxon>
        <taxon>lamiids</taxon>
        <taxon>Lamiales</taxon>
        <taxon>Oleaceae</taxon>
        <taxon>Forsythieae</taxon>
        <taxon>Forsythia</taxon>
    </lineage>
</organism>
<reference key="1">
    <citation type="journal article" date="2001" name="J. Biol. Chem.">
        <title>Secoisolariciresinol dehydrogenase purification, cloning, and functional expression. Implications for human health protection.</title>
        <authorList>
            <person name="Xia Z.Q."/>
            <person name="Costa M.A."/>
            <person name="Pelissier H.C."/>
            <person name="Davin L.B."/>
            <person name="Lewis N.G."/>
        </authorList>
    </citation>
    <scope>NUCLEOTIDE SEQUENCE [MRNA]</scope>
    <scope>PARTIAL PROTEIN SEQUENCE</scope>
    <scope>FUNCTION</scope>
    <scope>CATALYTIC ACTIVITY</scope>
    <source>
        <tissue>Stem</tissue>
    </source>
</reference>